<keyword id="KW-1003">Cell membrane</keyword>
<keyword id="KW-0903">Direct protein sequencing</keyword>
<keyword id="KW-0378">Hydrolase</keyword>
<keyword id="KW-0472">Membrane</keyword>
<keyword id="KW-1185">Reference proteome</keyword>
<keyword id="KW-0812">Transmembrane</keyword>
<keyword id="KW-1133">Transmembrane helix</keyword>
<protein>
    <recommendedName>
        <fullName>Undecaprenyl-diphosphatase</fullName>
        <ecNumber>3.6.1.27</ecNumber>
    </recommendedName>
    <alternativeName>
        <fullName>Dolicholpyrophosphatase</fullName>
    </alternativeName>
</protein>
<evidence type="ECO:0000255" key="1"/>
<reference key="1">
    <citation type="submission" date="2003-03" db="EMBL/GenBank/DDBJ databases">
        <title>The exo-ppase gene of the hyperthermophilic and acidophilic crenarchaeon Sulfolobus acidocaldarius.</title>
        <authorList>
            <person name="Schafer G."/>
            <person name="Moll R.G."/>
        </authorList>
    </citation>
    <scope>NUCLEOTIDE SEQUENCE [GENOMIC DNA]</scope>
    <source>
        <strain>ATCC 33909 / DSM 639 / JCM 8929 / NBRC 15157 / NCIMB 11770</strain>
    </source>
</reference>
<reference key="2">
    <citation type="journal article" date="2005" name="J. Bacteriol.">
        <title>The genome of Sulfolobus acidocaldarius, a model organism of the Crenarchaeota.</title>
        <authorList>
            <person name="Chen L."/>
            <person name="Bruegger K."/>
            <person name="Skovgaard M."/>
            <person name="Redder P."/>
            <person name="She Q."/>
            <person name="Torarinsson E."/>
            <person name="Greve B."/>
            <person name="Awayez M."/>
            <person name="Zibat A."/>
            <person name="Klenk H.-P."/>
            <person name="Garrett R.A."/>
        </authorList>
    </citation>
    <scope>NUCLEOTIDE SEQUENCE [LARGE SCALE GENOMIC DNA]</scope>
    <source>
        <strain>ATCC 33909 / DSM 639 / JCM 8929 / NBRC 15157 / NCIMB 11770</strain>
    </source>
</reference>
<reference key="3">
    <citation type="journal article" date="1992" name="Eur. J. Biochem.">
        <title>Characterization and purification of a membrane-bound archaebacterial pyrophosphatase from Sulfolobus acidocaldarius.</title>
        <authorList>
            <person name="Meyer W."/>
            <person name="Schaefer G."/>
        </authorList>
    </citation>
    <scope>PROTEIN SEQUENCE OF 1-30</scope>
    <source>
        <strain>ATCC 33909 / DSM 639 / JCM 8929 / NBRC 15157 / NCIMB 11770</strain>
    </source>
</reference>
<proteinExistence type="evidence at protein level"/>
<organism>
    <name type="scientific">Sulfolobus acidocaldarius (strain ATCC 33909 / DSM 639 / JCM 8929 / NBRC 15157 / NCIMB 11770)</name>
    <dbReference type="NCBI Taxonomy" id="330779"/>
    <lineage>
        <taxon>Archaea</taxon>
        <taxon>Thermoproteota</taxon>
        <taxon>Thermoprotei</taxon>
        <taxon>Sulfolobales</taxon>
        <taxon>Sulfolobaceae</taxon>
        <taxon>Sulfolobus</taxon>
    </lineage>
</organism>
<comment type="catalytic activity">
    <reaction>
        <text>di-trans,octa-cis-undecaprenyl diphosphate + H2O = di-trans,octa-cis-undecaprenyl phosphate + phosphate + H(+)</text>
        <dbReference type="Rhea" id="RHEA:28094"/>
        <dbReference type="ChEBI" id="CHEBI:15377"/>
        <dbReference type="ChEBI" id="CHEBI:15378"/>
        <dbReference type="ChEBI" id="CHEBI:43474"/>
        <dbReference type="ChEBI" id="CHEBI:58405"/>
        <dbReference type="ChEBI" id="CHEBI:60392"/>
        <dbReference type="EC" id="3.6.1.27"/>
    </reaction>
</comment>
<comment type="subcellular location">
    <subcellularLocation>
        <location>Cell membrane</location>
        <topology>Multi-pass membrane protein</topology>
    </subcellularLocation>
</comment>
<comment type="induction">
    <text>By polar lipids.</text>
</comment>
<name>UDDP_SULAC</name>
<feature type="chain" id="PRO_0000065717" description="Undecaprenyl-diphosphatase">
    <location>
        <begin position="1"/>
        <end position="206"/>
    </location>
</feature>
<feature type="transmembrane region" description="Helical" evidence="1">
    <location>
        <begin position="5"/>
        <end position="25"/>
    </location>
</feature>
<feature type="transmembrane region" description="Helical" evidence="1">
    <location>
        <begin position="53"/>
        <end position="73"/>
    </location>
</feature>
<feature type="transmembrane region" description="Helical" evidence="1">
    <location>
        <begin position="79"/>
        <end position="99"/>
    </location>
</feature>
<feature type="transmembrane region" description="Helical" evidence="1">
    <location>
        <begin position="138"/>
        <end position="158"/>
    </location>
</feature>
<feature type="transmembrane region" description="Helical" evidence="1">
    <location>
        <begin position="164"/>
        <end position="184"/>
    </location>
</feature>
<accession>P80143</accession>
<accession>Q4J9Z3</accession>
<accession>Q70SU5</accession>
<dbReference type="EC" id="3.6.1.27"/>
<dbReference type="EMBL" id="AJ550389">
    <property type="protein sequence ID" value="CAD79428.1"/>
    <property type="molecule type" value="Genomic_DNA"/>
</dbReference>
<dbReference type="EMBL" id="CP000077">
    <property type="protein sequence ID" value="AAY80382.1"/>
    <property type="molecule type" value="Genomic_DNA"/>
</dbReference>
<dbReference type="PIR" id="S24152">
    <property type="entry name" value="S24152"/>
</dbReference>
<dbReference type="RefSeq" id="WP_011277884.1">
    <property type="nucleotide sequence ID" value="NC_007181.1"/>
</dbReference>
<dbReference type="SMR" id="P80143"/>
<dbReference type="STRING" id="330779.Saci_1025"/>
<dbReference type="GeneID" id="14551534"/>
<dbReference type="KEGG" id="sai:Saci_1025"/>
<dbReference type="PATRIC" id="fig|330779.12.peg.982"/>
<dbReference type="eggNOG" id="arCOG03056">
    <property type="taxonomic scope" value="Archaea"/>
</dbReference>
<dbReference type="HOGENOM" id="CLU_072573_10_1_2"/>
<dbReference type="Proteomes" id="UP000001018">
    <property type="component" value="Chromosome"/>
</dbReference>
<dbReference type="GO" id="GO:0005886">
    <property type="term" value="C:plasma membrane"/>
    <property type="evidence" value="ECO:0007669"/>
    <property type="project" value="UniProtKB-SubCell"/>
</dbReference>
<dbReference type="GO" id="GO:0042392">
    <property type="term" value="F:sphingosine-1-phosphate phosphatase activity"/>
    <property type="evidence" value="ECO:0007669"/>
    <property type="project" value="TreeGrafter"/>
</dbReference>
<dbReference type="GO" id="GO:0050380">
    <property type="term" value="F:undecaprenyl-diphosphatase activity"/>
    <property type="evidence" value="ECO:0007669"/>
    <property type="project" value="UniProtKB-EC"/>
</dbReference>
<dbReference type="Gene3D" id="1.20.144.10">
    <property type="entry name" value="Phosphatidic acid phosphatase type 2/haloperoxidase"/>
    <property type="match status" value="1"/>
</dbReference>
<dbReference type="InterPro" id="IPR036938">
    <property type="entry name" value="P_Acid_Pase_2/haloperoxi_sf"/>
</dbReference>
<dbReference type="InterPro" id="IPR000326">
    <property type="entry name" value="P_Acid_Pase_2/haloperoxidase"/>
</dbReference>
<dbReference type="PANTHER" id="PTHR14969:SF13">
    <property type="entry name" value="AT30094P"/>
    <property type="match status" value="1"/>
</dbReference>
<dbReference type="PANTHER" id="PTHR14969">
    <property type="entry name" value="SPHINGOSINE-1-PHOSPHATE PHOSPHOHYDROLASE"/>
    <property type="match status" value="1"/>
</dbReference>
<dbReference type="Pfam" id="PF01569">
    <property type="entry name" value="PAP2"/>
    <property type="match status" value="1"/>
</dbReference>
<dbReference type="SMART" id="SM00014">
    <property type="entry name" value="acidPPc"/>
    <property type="match status" value="1"/>
</dbReference>
<dbReference type="SUPFAM" id="SSF48317">
    <property type="entry name" value="Acid phosphatase/Vanadium-dependent haloperoxidase"/>
    <property type="match status" value="1"/>
</dbReference>
<sequence length="206" mass="23525">MRKYYYWILLLLFLILSIYIKLIGGEQNIGFNVELFKLINYNQIATLNGLMVFLSKYGREYVWIPVTALLLIFKRTRKIGITLVISFVIAIVLGEVSKYVMAQLRPFNFVNPTYLLEPKPTDYSYPSGHALIVSTGAVTLLLTSPKWMWILGIIEAVLVSYSRVYVGVHWPLDVIAGWLLGSWISFLSVQIESTGPIKKIEQMLKA</sequence>
<gene>
    <name type="primary">sepP</name>
    <name type="ordered locus">Saci_1025</name>
</gene>